<reference key="1">
    <citation type="submission" date="2005-03" db="EMBL/GenBank/DDBJ databases">
        <title>Brevibacillus brevis strain 47, complete genome.</title>
        <authorList>
            <person name="Hosoyama A."/>
            <person name="Yamada R."/>
            <person name="Hongo Y."/>
            <person name="Terui Y."/>
            <person name="Ankai A."/>
            <person name="Masuyama W."/>
            <person name="Sekiguchi M."/>
            <person name="Takeda T."/>
            <person name="Asano K."/>
            <person name="Ohji S."/>
            <person name="Ichikawa N."/>
            <person name="Narita S."/>
            <person name="Aoki N."/>
            <person name="Miura H."/>
            <person name="Matsushita S."/>
            <person name="Sekigawa T."/>
            <person name="Yamagata H."/>
            <person name="Yoshikawa H."/>
            <person name="Udaka S."/>
            <person name="Tanikawa S."/>
            <person name="Fujita N."/>
        </authorList>
    </citation>
    <scope>NUCLEOTIDE SEQUENCE [LARGE SCALE GENOMIC DNA]</scope>
    <source>
        <strain>47 / JCM 6285 / NBRC 100599</strain>
    </source>
</reference>
<gene>
    <name evidence="1" type="primary">nuoH</name>
    <name type="ordered locus">BBR47_54410</name>
</gene>
<evidence type="ECO:0000255" key="1">
    <source>
        <dbReference type="HAMAP-Rule" id="MF_01350"/>
    </source>
</evidence>
<name>NUOH_BREBN</name>
<protein>
    <recommendedName>
        <fullName evidence="1">NADH-quinone oxidoreductase subunit H</fullName>
        <ecNumber evidence="1">7.1.1.-</ecNumber>
    </recommendedName>
    <alternativeName>
        <fullName evidence="1">NADH dehydrogenase I subunit H</fullName>
    </alternativeName>
    <alternativeName>
        <fullName evidence="1">NDH-1 subunit H</fullName>
    </alternativeName>
</protein>
<organism>
    <name type="scientific">Brevibacillus brevis (strain 47 / JCM 6285 / NBRC 100599)</name>
    <dbReference type="NCBI Taxonomy" id="358681"/>
    <lineage>
        <taxon>Bacteria</taxon>
        <taxon>Bacillati</taxon>
        <taxon>Bacillota</taxon>
        <taxon>Bacilli</taxon>
        <taxon>Bacillales</taxon>
        <taxon>Paenibacillaceae</taxon>
        <taxon>Brevibacillus</taxon>
    </lineage>
</organism>
<feature type="chain" id="PRO_1000166621" description="NADH-quinone oxidoreductase subunit H">
    <location>
        <begin position="1"/>
        <end position="336"/>
    </location>
</feature>
<feature type="transmembrane region" description="Helical" evidence="1">
    <location>
        <begin position="17"/>
        <end position="37"/>
    </location>
</feature>
<feature type="transmembrane region" description="Helical" evidence="1">
    <location>
        <begin position="85"/>
        <end position="105"/>
    </location>
</feature>
<feature type="transmembrane region" description="Helical" evidence="1">
    <location>
        <begin position="116"/>
        <end position="136"/>
    </location>
</feature>
<feature type="transmembrane region" description="Helical" evidence="1">
    <location>
        <begin position="154"/>
        <end position="174"/>
    </location>
</feature>
<feature type="transmembrane region" description="Helical" evidence="1">
    <location>
        <begin position="190"/>
        <end position="210"/>
    </location>
</feature>
<feature type="transmembrane region" description="Helical" evidence="1">
    <location>
        <begin position="247"/>
        <end position="267"/>
    </location>
</feature>
<feature type="transmembrane region" description="Helical" evidence="1">
    <location>
        <begin position="274"/>
        <end position="294"/>
    </location>
</feature>
<feature type="transmembrane region" description="Helical" evidence="1">
    <location>
        <begin position="309"/>
        <end position="329"/>
    </location>
</feature>
<dbReference type="EC" id="7.1.1.-" evidence="1"/>
<dbReference type="EMBL" id="AP008955">
    <property type="protein sequence ID" value="BAH46418.1"/>
    <property type="molecule type" value="Genomic_DNA"/>
</dbReference>
<dbReference type="SMR" id="C0Z769"/>
<dbReference type="STRING" id="358681.BBR47_54410"/>
<dbReference type="KEGG" id="bbe:BBR47_54410"/>
<dbReference type="eggNOG" id="COG1005">
    <property type="taxonomic scope" value="Bacteria"/>
</dbReference>
<dbReference type="HOGENOM" id="CLU_015134_0_1_9"/>
<dbReference type="Proteomes" id="UP000001877">
    <property type="component" value="Chromosome"/>
</dbReference>
<dbReference type="GO" id="GO:0005886">
    <property type="term" value="C:plasma membrane"/>
    <property type="evidence" value="ECO:0007669"/>
    <property type="project" value="UniProtKB-SubCell"/>
</dbReference>
<dbReference type="GO" id="GO:0003954">
    <property type="term" value="F:NADH dehydrogenase activity"/>
    <property type="evidence" value="ECO:0007669"/>
    <property type="project" value="TreeGrafter"/>
</dbReference>
<dbReference type="GO" id="GO:0016655">
    <property type="term" value="F:oxidoreductase activity, acting on NAD(P)H, quinone or similar compound as acceptor"/>
    <property type="evidence" value="ECO:0007669"/>
    <property type="project" value="UniProtKB-UniRule"/>
</dbReference>
<dbReference type="GO" id="GO:0048038">
    <property type="term" value="F:quinone binding"/>
    <property type="evidence" value="ECO:0007669"/>
    <property type="project" value="UniProtKB-KW"/>
</dbReference>
<dbReference type="GO" id="GO:0009060">
    <property type="term" value="P:aerobic respiration"/>
    <property type="evidence" value="ECO:0007669"/>
    <property type="project" value="TreeGrafter"/>
</dbReference>
<dbReference type="HAMAP" id="MF_01350">
    <property type="entry name" value="NDH1_NuoH"/>
    <property type="match status" value="1"/>
</dbReference>
<dbReference type="InterPro" id="IPR001694">
    <property type="entry name" value="NADH_UbQ_OxRdtase_su1/FPO"/>
</dbReference>
<dbReference type="InterPro" id="IPR018086">
    <property type="entry name" value="NADH_UbQ_OxRdtase_su1_CS"/>
</dbReference>
<dbReference type="NCBIfam" id="NF004741">
    <property type="entry name" value="PRK06076.1-2"/>
    <property type="match status" value="1"/>
</dbReference>
<dbReference type="PANTHER" id="PTHR11432">
    <property type="entry name" value="NADH DEHYDROGENASE SUBUNIT 1"/>
    <property type="match status" value="1"/>
</dbReference>
<dbReference type="PANTHER" id="PTHR11432:SF3">
    <property type="entry name" value="NADH-UBIQUINONE OXIDOREDUCTASE CHAIN 1"/>
    <property type="match status" value="1"/>
</dbReference>
<dbReference type="Pfam" id="PF00146">
    <property type="entry name" value="NADHdh"/>
    <property type="match status" value="1"/>
</dbReference>
<dbReference type="PROSITE" id="PS00668">
    <property type="entry name" value="COMPLEX1_ND1_2"/>
    <property type="match status" value="1"/>
</dbReference>
<comment type="function">
    <text evidence="1">NDH-1 shuttles electrons from NADH, via FMN and iron-sulfur (Fe-S) centers, to quinones in the respiratory chain. The immediate electron acceptor for the enzyme in this species is believed to be ubiquinone. Couples the redox reaction to proton translocation (for every two electrons transferred, four hydrogen ions are translocated across the cytoplasmic membrane), and thus conserves the redox energy in a proton gradient. This subunit may bind ubiquinone.</text>
</comment>
<comment type="catalytic activity">
    <reaction evidence="1">
        <text>a quinone + NADH + 5 H(+)(in) = a quinol + NAD(+) + 4 H(+)(out)</text>
        <dbReference type="Rhea" id="RHEA:57888"/>
        <dbReference type="ChEBI" id="CHEBI:15378"/>
        <dbReference type="ChEBI" id="CHEBI:24646"/>
        <dbReference type="ChEBI" id="CHEBI:57540"/>
        <dbReference type="ChEBI" id="CHEBI:57945"/>
        <dbReference type="ChEBI" id="CHEBI:132124"/>
    </reaction>
</comment>
<comment type="subunit">
    <text evidence="1">NDH-1 is composed of 14 different subunits. Subunits NuoA, H, J, K, L, M, N constitute the membrane sector of the complex.</text>
</comment>
<comment type="subcellular location">
    <subcellularLocation>
        <location evidence="1">Cell membrane</location>
        <topology evidence="1">Multi-pass membrane protein</topology>
    </subcellularLocation>
</comment>
<comment type="similarity">
    <text evidence="1">Belongs to the complex I subunit 1 family.</text>
</comment>
<accession>C0Z769</accession>
<sequence length="336" mass="37413">MMNTLLQQAPSWGTTLWFIIAAVLLLAVVLGFVTYAIYFERKVIGWMQLRIGPNRVGPLGLLQTVADVAKLLLKEDIRPQHADKALFTLAPILAYAPAFAVLAVMPFTDSIRFADLGIGLLYYIALSGITVLGVITAGWASNNKYSLIGGLRSAAQMISYEVPLVMSVVGIVLLTGSMNLKDIVEAQRDVWNIVPQFIGFAVFIIAAQAELNRTPFDLPEAESELVGGYHVEYSGFRFAMFMLAEYVYMFGMGALITILFFGGWLPIHPSLDFIPGIVWFILKFSVYVFLQFWIRATMPRLRVDQLMSFAWKVLLPVALFNILLTAVVVSYQNGMF</sequence>
<keyword id="KW-1003">Cell membrane</keyword>
<keyword id="KW-0472">Membrane</keyword>
<keyword id="KW-0520">NAD</keyword>
<keyword id="KW-0874">Quinone</keyword>
<keyword id="KW-1185">Reference proteome</keyword>
<keyword id="KW-1278">Translocase</keyword>
<keyword id="KW-0812">Transmembrane</keyword>
<keyword id="KW-1133">Transmembrane helix</keyword>
<keyword id="KW-0830">Ubiquinone</keyword>
<proteinExistence type="inferred from homology"/>